<accession>Q64902</accession>
<organism>
    <name type="scientific">Arctic squirrel hepatitis virus</name>
    <name type="common">ASHV</name>
    <dbReference type="NCBI Taxonomy" id="41952"/>
    <lineage>
        <taxon>Viruses</taxon>
        <taxon>Riboviria</taxon>
        <taxon>Pararnavirae</taxon>
        <taxon>Artverviricota</taxon>
        <taxon>Revtraviricetes</taxon>
        <taxon>Blubervirales</taxon>
        <taxon>Hepadnaviridae</taxon>
        <taxon>Orthohepadnavirus</taxon>
        <taxon>Ground squirrel hepatitis virus (strain 27)</taxon>
    </lineage>
</organism>
<reference key="1">
    <citation type="journal article" date="1996" name="J. Virol.">
        <title>A new hepadnavirus endemic in arctic ground squirrels in Alaska.</title>
        <authorList>
            <person name="Testut P."/>
            <person name="Renard C.A."/>
            <person name="Terradillos O."/>
            <person name="Vitvitski-Trepo L."/>
            <person name="Tekaia F."/>
            <person name="Degott C."/>
            <person name="Blake J."/>
            <person name="Boyer B."/>
            <person name="Buendia M.A."/>
        </authorList>
    </citation>
    <scope>NUCLEOTIDE SEQUENCE [GENOMIC DNA]</scope>
</reference>
<evidence type="ECO:0000255" key="1">
    <source>
        <dbReference type="HAMAP-Rule" id="MF_04074"/>
    </source>
</evidence>
<evidence type="ECO:0000256" key="2">
    <source>
        <dbReference type="SAM" id="MobiDB-lite"/>
    </source>
</evidence>
<dbReference type="EMBL" id="U29144">
    <property type="protein sequence ID" value="AAB08036.1"/>
    <property type="molecule type" value="Genomic_DNA"/>
</dbReference>
<dbReference type="Proteomes" id="UP000008172">
    <property type="component" value="Genome"/>
</dbReference>
<dbReference type="GO" id="GO:0033650">
    <property type="term" value="C:host cell mitochondrion"/>
    <property type="evidence" value="ECO:0007669"/>
    <property type="project" value="UniProtKB-SubCell"/>
</dbReference>
<dbReference type="GO" id="GO:0042025">
    <property type="term" value="C:host cell nucleus"/>
    <property type="evidence" value="ECO:0007669"/>
    <property type="project" value="UniProtKB-SubCell"/>
</dbReference>
<dbReference type="GO" id="GO:0006351">
    <property type="term" value="P:DNA-templated transcription"/>
    <property type="evidence" value="ECO:0007669"/>
    <property type="project" value="UniProtKB-UniRule"/>
</dbReference>
<dbReference type="GO" id="GO:0085033">
    <property type="term" value="P:symbiont-mediated activation of host NF-kappaB cascade"/>
    <property type="evidence" value="ECO:0007669"/>
    <property type="project" value="UniProtKB-UniRule"/>
</dbReference>
<dbReference type="GO" id="GO:0039592">
    <property type="term" value="P:symbiont-mediated arrest of host cell cycle during G2/M transition"/>
    <property type="evidence" value="ECO:0007669"/>
    <property type="project" value="UniProtKB-UniRule"/>
</dbReference>
<dbReference type="GO" id="GO:0019079">
    <property type="term" value="P:viral genome replication"/>
    <property type="evidence" value="ECO:0007669"/>
    <property type="project" value="UniProtKB-UniRule"/>
</dbReference>
<dbReference type="HAMAP" id="MF_04074">
    <property type="entry name" value="HBV_X"/>
    <property type="match status" value="1"/>
</dbReference>
<dbReference type="InterPro" id="IPR000236">
    <property type="entry name" value="Transactivation_prot_X"/>
</dbReference>
<dbReference type="Pfam" id="PF00739">
    <property type="entry name" value="X"/>
    <property type="match status" value="1"/>
</dbReference>
<protein>
    <recommendedName>
        <fullName evidence="1">Protein X</fullName>
    </recommendedName>
    <alternativeName>
        <fullName evidence="1">HBx</fullName>
    </alternativeName>
    <alternativeName>
        <fullName evidence="1">Peptide X</fullName>
    </alternativeName>
    <alternativeName>
        <fullName evidence="1">pX</fullName>
    </alternativeName>
</protein>
<keyword id="KW-1074">Activation of host NF-kappa-B by virus</keyword>
<keyword id="KW-0010">Activator</keyword>
<keyword id="KW-0053">Apoptosis</keyword>
<keyword id="KW-1035">Host cytoplasm</keyword>
<keyword id="KW-1079">Host G2/M cell cycle arrest by virus</keyword>
<keyword id="KW-1045">Host mitochondrion</keyword>
<keyword id="KW-1048">Host nucleus</keyword>
<keyword id="KW-0945">Host-virus interaction</keyword>
<keyword id="KW-1121">Modulation of host cell cycle by virus</keyword>
<keyword id="KW-0804">Transcription</keyword>
<keyword id="KW-0805">Transcription regulation</keyword>
<gene>
    <name evidence="1" type="primary">X</name>
</gene>
<feature type="chain" id="PRO_0000322110" description="Protein X">
    <location>
        <begin position="1"/>
        <end position="138"/>
    </location>
</feature>
<feature type="region of interest" description="Disordered" evidence="2">
    <location>
        <begin position="24"/>
        <end position="48"/>
    </location>
</feature>
<feature type="region of interest" description="Mitochondrial targeting sequence" evidence="1">
    <location>
        <begin position="68"/>
        <end position="113"/>
    </location>
</feature>
<organismHost>
    <name type="scientific">Urocitellus parryii kennicottii</name>
    <dbReference type="NCBI Taxonomy" id="259022"/>
</organismHost>
<name>X_ASHV</name>
<sequence>MAARLCCQLDSSRDVVLLRPFGSESGGPAVSRPSAGSASRADSPLPSAAESHLPLGRLPACFASPSGPCCLGFTCAEFGAMVSTMNFVTWHAKRQLGMPTKDLWTPYVRNQLLTKWEEGTIDSRLPLFVLGGCRHKYM</sequence>
<proteinExistence type="inferred from homology"/>
<comment type="function">
    <text evidence="1">Multifunctional protein that plays a role in silencing host antiviral defenses and promoting viral transcription. Does not seem to be essential for HBV infection. May be directly involved in development of cirrhosis and liver cancer (hepatocellular carcinoma). Most of cytosolic activities involve modulation of cytosolic calcium. The effect on apoptosis is controversial depending on the cell types in which the studies have been conducted. May induce apoptosis by localizing in mitochondria and causing loss of mitochondrial membrane potential. May also modulate apoptosis by binding host CFLAR, a key regulator of the death-inducing signaling complex (DISC). Promotes viral transcription by using the host E3 ubiquitin ligase DDB1 to target the SMC5-SMC6 complex to proteasomal degradation. This host complex would otherwise bind to viral episomal DNA, and prevents its transcription. Moderately stimulates transcription of many different viral and cellular transcription elements. Promoters and enhancers stimulated by HBx contain DNA binding sites for NF-kappa-B, AP-1, AP-2, c-EBP, ATF/CREB, or the calcium-activated factor NF-AT.</text>
</comment>
<comment type="subunit">
    <text evidence="1">May form homodimer. May interact with host CEBPA, CFLAR, CREB1, DDB1, E4F1, HBXIP, HSPD1/HSP60, NFKBIA, POLR2E and SMAD4. Interacts with host SMC5-SMC6 complex and induces its degradation. Interacts with host TRPC4AP; leading to prevent ubiquitination of TRPC4AP. Interacts with host PLSCR1; this interaction promotes ubiquitination and degradation of HBx and impairs HBx-mediated cell proliferation.</text>
</comment>
<comment type="subcellular location">
    <subcellularLocation>
        <location evidence="1">Host cytoplasm</location>
    </subcellularLocation>
    <subcellularLocation>
        <location evidence="1">Host nucleus</location>
    </subcellularLocation>
    <subcellularLocation>
        <location evidence="1">Host mitochondrion</location>
    </subcellularLocation>
    <text evidence="1">Mainly cytoplasmic as only a fraction is detected in the nucleus. In cytoplasm, a minor fraction associates with mitochondria or proteasomes.</text>
</comment>
<comment type="PTM">
    <text evidence="1">A fraction may be phosphorylated in insect cells and HepG2 cells, a human hepatoblastoma cell line. Phosphorylated in vitro by host protein kinase C or mitogen-activated protein kinase. N-acetylated in insect cells.</text>
</comment>
<comment type="similarity">
    <text evidence="1">Belongs to the orthohepadnavirus protein X family.</text>
</comment>